<sequence length="171" mass="18429">MAAMNSSVLTCSYAIAGSGSVELNQKVGLVNSSVGFGQKKQMIMPVIKAQRVVGDDVDGSNGRRSAMVFLAATLFSTAAVSASANAGVIDEYLERSKTNKELNDKKRLATSGANFARAFTVQFGSCKFPENFTGCQDLAKQKKVPFISEDIALECEGKDKYKCGSNVFWKW</sequence>
<reference key="1">
    <citation type="online journal article" date="1995" name="Plant Gene Register">
        <title>Nucleotide sequence of an Arabidopsis thaliana cDNA clone encoding the complete precursor for a homolog to the barley extrinsic thylakoid lumenal polypeptide PSI-N.</title>
        <authorList>
            <person name="Sehnke P.C."/>
            <person name="Ferl R.J."/>
        </authorList>
        <locator>PGR95-088</locator>
    </citation>
    <scope>NUCLEOTIDE SEQUENCE [MRNA] (ISOFORM 1)</scope>
</reference>
<reference key="2">
    <citation type="journal article" date="1997" name="DNA Res.">
        <title>Structural analysis of Arabidopsis thaliana chromosome 5. III. Sequence features of the regions of 1,191,918 bp covered by seventeen physically assigned P1 clones.</title>
        <authorList>
            <person name="Nakamura Y."/>
            <person name="Sato S."/>
            <person name="Kaneko T."/>
            <person name="Kotani H."/>
            <person name="Asamizu E."/>
            <person name="Miyajima N."/>
            <person name="Tabata S."/>
        </authorList>
    </citation>
    <scope>NUCLEOTIDE SEQUENCE [LARGE SCALE GENOMIC DNA]</scope>
    <source>
        <strain>cv. Columbia</strain>
    </source>
</reference>
<reference key="3">
    <citation type="journal article" date="2017" name="Plant J.">
        <title>Araport11: a complete reannotation of the Arabidopsis thaliana reference genome.</title>
        <authorList>
            <person name="Cheng C.Y."/>
            <person name="Krishnakumar V."/>
            <person name="Chan A.P."/>
            <person name="Thibaud-Nissen F."/>
            <person name="Schobel S."/>
            <person name="Town C.D."/>
        </authorList>
    </citation>
    <scope>GENOME REANNOTATION</scope>
    <source>
        <strain>cv. Columbia</strain>
    </source>
</reference>
<reference key="4">
    <citation type="journal article" date="2003" name="Science">
        <title>Empirical analysis of transcriptional activity in the Arabidopsis genome.</title>
        <authorList>
            <person name="Yamada K."/>
            <person name="Lim J."/>
            <person name="Dale J.M."/>
            <person name="Chen H."/>
            <person name="Shinn P."/>
            <person name="Palm C.J."/>
            <person name="Southwick A.M."/>
            <person name="Wu H.C."/>
            <person name="Kim C.J."/>
            <person name="Nguyen M."/>
            <person name="Pham P.K."/>
            <person name="Cheuk R.F."/>
            <person name="Karlin-Newmann G."/>
            <person name="Liu S.X."/>
            <person name="Lam B."/>
            <person name="Sakano H."/>
            <person name="Wu T."/>
            <person name="Yu G."/>
            <person name="Miranda M."/>
            <person name="Quach H.L."/>
            <person name="Tripp M."/>
            <person name="Chang C.H."/>
            <person name="Lee J.M."/>
            <person name="Toriumi M.J."/>
            <person name="Chan M.M."/>
            <person name="Tang C.C."/>
            <person name="Onodera C.S."/>
            <person name="Deng J.M."/>
            <person name="Akiyama K."/>
            <person name="Ansari Y."/>
            <person name="Arakawa T."/>
            <person name="Banh J."/>
            <person name="Banno F."/>
            <person name="Bowser L."/>
            <person name="Brooks S.Y."/>
            <person name="Carninci P."/>
            <person name="Chao Q."/>
            <person name="Choy N."/>
            <person name="Enju A."/>
            <person name="Goldsmith A.D."/>
            <person name="Gurjal M."/>
            <person name="Hansen N.F."/>
            <person name="Hayashizaki Y."/>
            <person name="Johnson-Hopson C."/>
            <person name="Hsuan V.W."/>
            <person name="Iida K."/>
            <person name="Karnes M."/>
            <person name="Khan S."/>
            <person name="Koesema E."/>
            <person name="Ishida J."/>
            <person name="Jiang P.X."/>
            <person name="Jones T."/>
            <person name="Kawai J."/>
            <person name="Kamiya A."/>
            <person name="Meyers C."/>
            <person name="Nakajima M."/>
            <person name="Narusaka M."/>
            <person name="Seki M."/>
            <person name="Sakurai T."/>
            <person name="Satou M."/>
            <person name="Tamse R."/>
            <person name="Vaysberg M."/>
            <person name="Wallender E.K."/>
            <person name="Wong C."/>
            <person name="Yamamura Y."/>
            <person name="Yuan S."/>
            <person name="Shinozaki K."/>
            <person name="Davis R.W."/>
            <person name="Theologis A."/>
            <person name="Ecker J.R."/>
        </authorList>
    </citation>
    <scope>NUCLEOTIDE SEQUENCE [LARGE SCALE MRNA] (ISOFORM 1)</scope>
    <source>
        <strain>cv. Columbia</strain>
    </source>
</reference>
<reference key="5">
    <citation type="journal article" date="2002" name="Plant Cell">
        <title>Central functions of the lumenal and peripheral thylakoid proteome of Arabidopsis determined by experimentation and genome-wide prediction.</title>
        <authorList>
            <person name="Peltier J.-B."/>
            <person name="Emanuelsson O."/>
            <person name="Kalume D.E."/>
            <person name="Ytterberg J."/>
            <person name="Friso G."/>
            <person name="Rudella A."/>
            <person name="Liberles D.A."/>
            <person name="Soederberg L."/>
            <person name="Roepstorff P."/>
            <person name="von Heijne G."/>
            <person name="van Wijk K.J."/>
        </authorList>
    </citation>
    <scope>PROTEIN SEQUENCE OF N-TERMINUS</scope>
    <scope>IDENTIFICATION BY MASS SPECTROMETRY</scope>
</reference>
<reference key="6">
    <citation type="journal article" date="1999" name="Plant J.">
        <title>The interaction between plastocyanin and photosystem I is inefficient in transgenic Arabidopsis plants lacking the PSI-N subunit of photosystem I.</title>
        <authorList>
            <person name="Haldrup A."/>
            <person name="Naver H."/>
            <person name="Scheller H.V."/>
        </authorList>
    </citation>
    <scope>FUNCTION</scope>
</reference>
<reference key="7">
    <citation type="journal article" date="2000" name="Plant Physiol.">
        <title>Interaction of a plant 14-3-3 protein with the signal peptide of a thylakoid-targeted chloroplast precursor protein and the presence of 14-3-3 isoforms in the chloroplast stroma.</title>
        <authorList>
            <person name="Sehnke P.C."/>
            <person name="Henry R."/>
            <person name="Cline K."/>
            <person name="Ferl R.J."/>
        </authorList>
    </citation>
    <scope>INTERACTION WITH 14-3-3-LIKE PROTEINS</scope>
</reference>
<reference key="8">
    <citation type="journal article" date="2002" name="Biophys. J.">
        <title>Pigment organization and energy transfer dynamics in isolated photosystem I (PSI) complexes from Arabidopsis thaliana depleted of the PSI-G, PSI-K, PSI-L, or PSI-N subunit.</title>
        <authorList>
            <person name="Ihalainen J.A."/>
            <person name="Jensen P.E."/>
            <person name="Haldrup A."/>
            <person name="van Stokkum I.H.M."/>
            <person name="van Grondelle R."/>
            <person name="Scheller H.V."/>
            <person name="Dekker J.P."/>
        </authorList>
    </citation>
    <scope>FUNCTION</scope>
</reference>
<reference key="9">
    <citation type="journal article" date="2008" name="PLoS ONE">
        <title>Sorting signals, N-terminal modifications and abundance of the chloroplast proteome.</title>
        <authorList>
            <person name="Zybailov B."/>
            <person name="Rutschow H."/>
            <person name="Friso G."/>
            <person name="Rudella A."/>
            <person name="Emanuelsson O."/>
            <person name="Sun Q."/>
            <person name="van Wijk K.J."/>
        </authorList>
    </citation>
    <scope>ACETYLATION AT GLY-87</scope>
    <scope>IDENTIFICATION BY MASS SPECTROMETRY</scope>
    <scope>SUBCELLULAR LOCATION [LARGE SCALE ANALYSIS]</scope>
</reference>
<reference key="10">
    <citation type="journal article" date="2009" name="Plant Physiol.">
        <title>Large-scale Arabidopsis phosphoproteome profiling reveals novel chloroplast kinase substrates and phosphorylation networks.</title>
        <authorList>
            <person name="Reiland S."/>
            <person name="Messerli G."/>
            <person name="Baerenfaller K."/>
            <person name="Gerrits B."/>
            <person name="Endler A."/>
            <person name="Grossmann J."/>
            <person name="Gruissem W."/>
            <person name="Baginsky S."/>
        </authorList>
    </citation>
    <scope>IDENTIFICATION BY MASS SPECTROMETRY [LARGE SCALE ANALYSIS]</scope>
</reference>
<evidence type="ECO:0000255" key="1"/>
<evidence type="ECO:0000269" key="2">
    <source>
    </source>
</evidence>
<evidence type="ECO:0000269" key="3">
    <source>
    </source>
</evidence>
<evidence type="ECO:0000269" key="4">
    <source>
    </source>
</evidence>
<evidence type="ECO:0000269" key="5">
    <source>
    </source>
</evidence>
<evidence type="ECO:0000305" key="6"/>
<keyword id="KW-0007">Acetylation</keyword>
<keyword id="KW-0025">Alternative splicing</keyword>
<keyword id="KW-0150">Chloroplast</keyword>
<keyword id="KW-0903">Direct protein sequencing</keyword>
<keyword id="KW-0472">Membrane</keyword>
<keyword id="KW-0602">Photosynthesis</keyword>
<keyword id="KW-0603">Photosystem I</keyword>
<keyword id="KW-0934">Plastid</keyword>
<keyword id="KW-1185">Reference proteome</keyword>
<keyword id="KW-0793">Thylakoid</keyword>
<keyword id="KW-0809">Transit peptide</keyword>
<dbReference type="EMBL" id="U32176">
    <property type="protein sequence ID" value="AAA93075.1"/>
    <property type="molecule type" value="mRNA"/>
</dbReference>
<dbReference type="EMBL" id="AB008266">
    <property type="protein sequence ID" value="BAB10272.1"/>
    <property type="molecule type" value="Genomic_DNA"/>
</dbReference>
<dbReference type="EMBL" id="CP002688">
    <property type="protein sequence ID" value="AED97832.1"/>
    <property type="molecule type" value="Genomic_DNA"/>
</dbReference>
<dbReference type="EMBL" id="AY062835">
    <property type="protein sequence ID" value="AAL32913.1"/>
    <property type="molecule type" value="mRNA"/>
</dbReference>
<dbReference type="EMBL" id="AY081594">
    <property type="protein sequence ID" value="AAM10156.1"/>
    <property type="molecule type" value="mRNA"/>
</dbReference>
<dbReference type="RefSeq" id="NP_201209.1">
    <molecule id="P49107-1"/>
    <property type="nucleotide sequence ID" value="NM_125800.5"/>
</dbReference>
<dbReference type="SMR" id="P49107"/>
<dbReference type="BioGRID" id="21767">
    <property type="interactions" value="3"/>
</dbReference>
<dbReference type="FunCoup" id="P49107">
    <property type="interactions" value="1354"/>
</dbReference>
<dbReference type="IntAct" id="P49107">
    <property type="interactions" value="1"/>
</dbReference>
<dbReference type="STRING" id="3702.P49107"/>
<dbReference type="iPTMnet" id="P49107"/>
<dbReference type="PaxDb" id="3702-AT5G64040.2"/>
<dbReference type="ProteomicsDB" id="226395">
    <molecule id="P49107-1"/>
</dbReference>
<dbReference type="EnsemblPlants" id="AT5G64040.1">
    <molecule id="P49107-1"/>
    <property type="protein sequence ID" value="AT5G64040.1"/>
    <property type="gene ID" value="AT5G64040"/>
</dbReference>
<dbReference type="GeneID" id="836525"/>
<dbReference type="Gramene" id="AT5G64040.1">
    <molecule id="P49107-1"/>
    <property type="protein sequence ID" value="AT5G64040.1"/>
    <property type="gene ID" value="AT5G64040"/>
</dbReference>
<dbReference type="KEGG" id="ath:AT5G64040"/>
<dbReference type="Araport" id="AT5G64040"/>
<dbReference type="TAIR" id="AT5G64040">
    <property type="gene designation" value="PSAN"/>
</dbReference>
<dbReference type="eggNOG" id="ENOG502S2VP">
    <property type="taxonomic scope" value="Eukaryota"/>
</dbReference>
<dbReference type="HOGENOM" id="CLU_113897_1_0_1"/>
<dbReference type="InParanoid" id="P49107"/>
<dbReference type="OMA" id="CEGRDKY"/>
<dbReference type="OrthoDB" id="512227at2759"/>
<dbReference type="PhylomeDB" id="P49107"/>
<dbReference type="BioCyc" id="MetaCyc:MONOMER-1095"/>
<dbReference type="PRO" id="PR:P49107"/>
<dbReference type="Proteomes" id="UP000006548">
    <property type="component" value="Chromosome 5"/>
</dbReference>
<dbReference type="ExpressionAtlas" id="P49107">
    <property type="expression patterns" value="baseline and differential"/>
</dbReference>
<dbReference type="GO" id="GO:0009535">
    <property type="term" value="C:chloroplast thylakoid membrane"/>
    <property type="evidence" value="ECO:0007669"/>
    <property type="project" value="UniProtKB-SubCell"/>
</dbReference>
<dbReference type="GO" id="GO:0009522">
    <property type="term" value="C:photosystem I"/>
    <property type="evidence" value="ECO:0007669"/>
    <property type="project" value="UniProtKB-KW"/>
</dbReference>
<dbReference type="GO" id="GO:0019904">
    <property type="term" value="F:protein domain specific binding"/>
    <property type="evidence" value="ECO:0000353"/>
    <property type="project" value="CAFA"/>
</dbReference>
<dbReference type="GO" id="GO:0015979">
    <property type="term" value="P:photosynthesis"/>
    <property type="evidence" value="ECO:0007669"/>
    <property type="project" value="UniProtKB-KW"/>
</dbReference>
<dbReference type="FunFam" id="4.10.1190.10:FF:000001">
    <property type="entry name" value="Photosystem I reaction center subunit N"/>
    <property type="match status" value="1"/>
</dbReference>
<dbReference type="Gene3D" id="4.10.1190.10">
    <property type="entry name" value="Chlorophyll A-B binding protein"/>
    <property type="match status" value="1"/>
</dbReference>
<dbReference type="InterPro" id="IPR008796">
    <property type="entry name" value="PSAN"/>
</dbReference>
<dbReference type="InterPro" id="IPR044907">
    <property type="entry name" value="PSAN_sf"/>
</dbReference>
<dbReference type="PANTHER" id="PTHR36814">
    <property type="entry name" value="PHOTOSYSTEM I REACTION CENTER SUBUNIT N, CHLOROPLASTIC"/>
    <property type="match status" value="1"/>
</dbReference>
<dbReference type="PANTHER" id="PTHR36814:SF1">
    <property type="entry name" value="PHOTOSYSTEM I REACTION CENTER SUBUNIT N, CHLOROPLASTIC"/>
    <property type="match status" value="1"/>
</dbReference>
<dbReference type="Pfam" id="PF05479">
    <property type="entry name" value="PsaN"/>
    <property type="match status" value="1"/>
</dbReference>
<comment type="function">
    <text evidence="2 4">May function in mediating the binding of the antenna complexes to the PSI reaction center and core antenna. Plays an important role in docking plastocyanin to the PSI complex. Does not bind pigments.</text>
</comment>
<comment type="subunit">
    <text evidence="3">Interacts with GRF5, GRF7, GRF9 and GRF10. The transit peptide is the site of PSAN that associates with 14-3-3.</text>
</comment>
<comment type="subcellular location">
    <subcellularLocation>
        <location evidence="5">Plastid</location>
        <location evidence="5">Chloroplast thylakoid membrane</location>
        <topology>Peripheral membrane protein</topology>
        <orientation>Lumenal side</orientation>
    </subcellularLocation>
</comment>
<comment type="alternative products">
    <event type="alternative splicing"/>
    <isoform>
        <id>P49107-1</id>
        <name>1</name>
        <sequence type="displayed"/>
    </isoform>
    <isoform>
        <id>P49107-2</id>
        <name>2</name>
        <sequence type="described" ref="VSP_034386 VSP_034387"/>
    </isoform>
</comment>
<comment type="miscellaneous">
    <text>The N-terminal Edman sequence is 2 amino acids down-stream of the N-acetylated terminal peptide identified by mass spectrometry. This suggests an additional processing.</text>
</comment>
<comment type="similarity">
    <text evidence="6">Belongs to the psaN family.</text>
</comment>
<accession>P49107</accession>
<accession>Q2V2V9</accession>
<protein>
    <recommendedName>
        <fullName>Photosystem I reaction center subunit N, chloroplastic</fullName>
        <shortName>PSI-N</shortName>
    </recommendedName>
</protein>
<proteinExistence type="evidence at protein level"/>
<name>PSAN_ARATH</name>
<feature type="transit peptide" description="Chloroplast" evidence="1">
    <location>
        <begin position="1"/>
        <end position="49"/>
    </location>
</feature>
<feature type="transit peptide" description="Thylakoid" evidence="1">
    <location>
        <begin position="50"/>
        <end position="86"/>
    </location>
</feature>
<feature type="chain" id="PRO_0000029356" description="Photosystem I reaction center subunit N, chloroplastic">
    <location>
        <begin position="87"/>
        <end position="171"/>
    </location>
</feature>
<feature type="modified residue" description="N-acetylglycine; partial" evidence="5">
    <location>
        <position position="87"/>
    </location>
</feature>
<feature type="splice variant" id="VSP_034386" description="In isoform 2." evidence="6">
    <original>KVPFISEDIALEC</original>
    <variation>VCLISTTFSFLWE</variation>
    <location>
        <begin position="143"/>
        <end position="155"/>
    </location>
</feature>
<feature type="splice variant" id="VSP_034387" description="In isoform 2." evidence="6">
    <location>
        <begin position="156"/>
        <end position="171"/>
    </location>
</feature>
<gene>
    <name type="primary">PSAN</name>
    <name type="ordered locus">At5g64040</name>
    <name type="ORF">MHJ24.2</name>
</gene>
<organism>
    <name type="scientific">Arabidopsis thaliana</name>
    <name type="common">Mouse-ear cress</name>
    <dbReference type="NCBI Taxonomy" id="3702"/>
    <lineage>
        <taxon>Eukaryota</taxon>
        <taxon>Viridiplantae</taxon>
        <taxon>Streptophyta</taxon>
        <taxon>Embryophyta</taxon>
        <taxon>Tracheophyta</taxon>
        <taxon>Spermatophyta</taxon>
        <taxon>Magnoliopsida</taxon>
        <taxon>eudicotyledons</taxon>
        <taxon>Gunneridae</taxon>
        <taxon>Pentapetalae</taxon>
        <taxon>rosids</taxon>
        <taxon>malvids</taxon>
        <taxon>Brassicales</taxon>
        <taxon>Brassicaceae</taxon>
        <taxon>Camelineae</taxon>
        <taxon>Arabidopsis</taxon>
    </lineage>
</organism>